<evidence type="ECO:0000255" key="1">
    <source>
        <dbReference type="HAMAP-Rule" id="MF_00059"/>
    </source>
</evidence>
<sequence length="333" mass="38560">MVREKIRVSTRTLKWKCVESRADSKRLYYGRFILSPLMKGQGDTIGIAMRKALLGEIEGTCITRAKSEKIPHEYSTIVGIQESVHEILMNLKEIVLRSNLYGTRDASICVKGPGCVTAQDIILPPSVEIVDNTQHIANLMEPINLCIELKIERNRGYHIQTPNNFQDASYPMDAIFMPVRNVNHSIHSYVNGNEKQEILFLEIWTNGSLTPKEALHEASRNLIDLFIPFLHAEEEKENFHLKNNKKKVTLPLFTFHEKLAKLRKKKKEIALKYIFIDQSELPPRIYNCLKRCNIHTLFDLLNNSPDELMKIKHFRIEDVKHILDILEMEKNFA</sequence>
<feature type="chain" id="PRO_0000225918" description="DNA-directed RNA polymerase subunit alpha">
    <location>
        <begin position="1"/>
        <end position="333"/>
    </location>
</feature>
<feature type="region of interest" description="Alpha N-terminal domain (alpha-NTD)" evidence="1">
    <location>
        <begin position="1"/>
        <end position="233"/>
    </location>
</feature>
<feature type="region of interest" description="Alpha C-terminal domain (alpha-CTD)" evidence="1">
    <location>
        <begin position="269"/>
        <end position="333"/>
    </location>
</feature>
<geneLocation type="chloroplast"/>
<gene>
    <name evidence="1" type="primary">rpoA</name>
    <name type="ordered locus">CsCp074</name>
</gene>
<reference key="1">
    <citation type="journal article" date="2006" name="Plant Cell Rep.">
        <title>Complete sequence and organization of the cucumber (Cucumis sativus L. cv. Baekmibaekdadagi) chloroplast genome.</title>
        <authorList>
            <person name="Kim J.-S."/>
            <person name="Jung J.D."/>
            <person name="Lee J.-A."/>
            <person name="Park H.-W."/>
            <person name="Oh K.-H."/>
            <person name="Jeong W.J."/>
            <person name="Choi D.-W."/>
            <person name="Liu J.R."/>
            <person name="Cho K.Y."/>
        </authorList>
    </citation>
    <scope>NUCLEOTIDE SEQUENCE [LARGE SCALE GENOMIC DNA]</scope>
    <source>
        <strain>cv. Baekmibaekdadagi</strain>
    </source>
</reference>
<reference key="2">
    <citation type="journal article" date="2007" name="Cell. Mol. Biol. Lett.">
        <title>The complete structure of the cucumber (Cucumis sativus L.) chloroplast genome: its composition and comparative analysis.</title>
        <authorList>
            <person name="Plader W.W."/>
            <person name="Yukawa Y."/>
            <person name="Sugiura M."/>
            <person name="Malepszy S."/>
        </authorList>
    </citation>
    <scope>NUCLEOTIDE SEQUENCE [LARGE SCALE GENOMIC DNA]</scope>
    <source>
        <strain>cv. Borszczagowski</strain>
    </source>
</reference>
<reference key="3">
    <citation type="journal article" date="2007" name="Genome">
        <title>Sequencing cucumber (Cucumis sativus L.) chloroplast genomes identifies differences between chilling-tolerant and -susceptible cucumber lines.</title>
        <authorList>
            <person name="Chung S.-M."/>
            <person name="Gordon V.S."/>
            <person name="Staub J.E."/>
        </authorList>
    </citation>
    <scope>NUCLEOTIDE SEQUENCE [LARGE SCALE GENOMIC DNA]</scope>
    <source>
        <strain>cv. Chipper</strain>
        <strain>cv. Gy14</strain>
    </source>
</reference>
<dbReference type="EC" id="2.7.7.6" evidence="1"/>
<dbReference type="EMBL" id="DQ119058">
    <property type="protein sequence ID" value="AAZ94682.1"/>
    <property type="molecule type" value="Genomic_DNA"/>
</dbReference>
<dbReference type="EMBL" id="AJ970307">
    <property type="protein sequence ID" value="CAJ00791.1"/>
    <property type="molecule type" value="Genomic_DNA"/>
</dbReference>
<dbReference type="EMBL" id="DQ865975">
    <property type="protein sequence ID" value="ABI97448.1"/>
    <property type="molecule type" value="Genomic_DNA"/>
</dbReference>
<dbReference type="EMBL" id="DQ865976">
    <property type="protein sequence ID" value="ABI98777.1"/>
    <property type="molecule type" value="Genomic_DNA"/>
</dbReference>
<dbReference type="RefSeq" id="YP_247632.1">
    <property type="nucleotide sequence ID" value="NC_007144.1"/>
</dbReference>
<dbReference type="SMR" id="Q4VZK3"/>
<dbReference type="GeneID" id="3429301"/>
<dbReference type="KEGG" id="csv:3429301"/>
<dbReference type="eggNOG" id="KOG0408">
    <property type="taxonomic scope" value="Eukaryota"/>
</dbReference>
<dbReference type="OrthoDB" id="360088at2759"/>
<dbReference type="GO" id="GO:0009507">
    <property type="term" value="C:chloroplast"/>
    <property type="evidence" value="ECO:0007669"/>
    <property type="project" value="UniProtKB-SubCell"/>
</dbReference>
<dbReference type="GO" id="GO:0000428">
    <property type="term" value="C:DNA-directed RNA polymerase complex"/>
    <property type="evidence" value="ECO:0007669"/>
    <property type="project" value="UniProtKB-KW"/>
</dbReference>
<dbReference type="GO" id="GO:0005739">
    <property type="term" value="C:mitochondrion"/>
    <property type="evidence" value="ECO:0007669"/>
    <property type="project" value="GOC"/>
</dbReference>
<dbReference type="GO" id="GO:0003677">
    <property type="term" value="F:DNA binding"/>
    <property type="evidence" value="ECO:0007669"/>
    <property type="project" value="UniProtKB-UniRule"/>
</dbReference>
<dbReference type="GO" id="GO:0003899">
    <property type="term" value="F:DNA-directed RNA polymerase activity"/>
    <property type="evidence" value="ECO:0007669"/>
    <property type="project" value="UniProtKB-UniRule"/>
</dbReference>
<dbReference type="GO" id="GO:0046983">
    <property type="term" value="F:protein dimerization activity"/>
    <property type="evidence" value="ECO:0007669"/>
    <property type="project" value="InterPro"/>
</dbReference>
<dbReference type="GO" id="GO:0006351">
    <property type="term" value="P:DNA-templated transcription"/>
    <property type="evidence" value="ECO:0007669"/>
    <property type="project" value="UniProtKB-UniRule"/>
</dbReference>
<dbReference type="CDD" id="cd06928">
    <property type="entry name" value="RNAP_alpha_NTD"/>
    <property type="match status" value="1"/>
</dbReference>
<dbReference type="FunFam" id="2.170.120.12:FF:000001">
    <property type="entry name" value="DNA-directed RNA polymerase subunit alpha"/>
    <property type="match status" value="1"/>
</dbReference>
<dbReference type="Gene3D" id="1.10.150.20">
    <property type="entry name" value="5' to 3' exonuclease, C-terminal subdomain"/>
    <property type="match status" value="1"/>
</dbReference>
<dbReference type="Gene3D" id="2.170.120.12">
    <property type="entry name" value="DNA-directed RNA polymerase, insert domain"/>
    <property type="match status" value="1"/>
</dbReference>
<dbReference type="Gene3D" id="3.30.1360.10">
    <property type="entry name" value="RNA polymerase, RBP11-like subunit"/>
    <property type="match status" value="1"/>
</dbReference>
<dbReference type="HAMAP" id="MF_00059">
    <property type="entry name" value="RNApol_bact_RpoA"/>
    <property type="match status" value="1"/>
</dbReference>
<dbReference type="InterPro" id="IPR011262">
    <property type="entry name" value="DNA-dir_RNA_pol_insert"/>
</dbReference>
<dbReference type="InterPro" id="IPR011263">
    <property type="entry name" value="DNA-dir_RNA_pol_RpoA/D/Rpb3"/>
</dbReference>
<dbReference type="InterPro" id="IPR011773">
    <property type="entry name" value="DNA-dir_RpoA"/>
</dbReference>
<dbReference type="InterPro" id="IPR036603">
    <property type="entry name" value="RBP11-like"/>
</dbReference>
<dbReference type="InterPro" id="IPR011260">
    <property type="entry name" value="RNAP_asu_C"/>
</dbReference>
<dbReference type="InterPro" id="IPR036643">
    <property type="entry name" value="RNApol_insert_sf"/>
</dbReference>
<dbReference type="NCBIfam" id="TIGR02027">
    <property type="entry name" value="rpoA"/>
    <property type="match status" value="1"/>
</dbReference>
<dbReference type="PANTHER" id="PTHR32108">
    <property type="entry name" value="DNA-DIRECTED RNA POLYMERASE SUBUNIT ALPHA"/>
    <property type="match status" value="1"/>
</dbReference>
<dbReference type="PANTHER" id="PTHR32108:SF0">
    <property type="entry name" value="DNA-DIRECTED RNA POLYMERASE SUBUNIT ALPHA"/>
    <property type="match status" value="1"/>
</dbReference>
<dbReference type="Pfam" id="PF01000">
    <property type="entry name" value="RNA_pol_A_bac"/>
    <property type="match status" value="1"/>
</dbReference>
<dbReference type="Pfam" id="PF03118">
    <property type="entry name" value="RNA_pol_A_CTD"/>
    <property type="match status" value="1"/>
</dbReference>
<dbReference type="Pfam" id="PF01193">
    <property type="entry name" value="RNA_pol_L"/>
    <property type="match status" value="1"/>
</dbReference>
<dbReference type="SMART" id="SM00662">
    <property type="entry name" value="RPOLD"/>
    <property type="match status" value="1"/>
</dbReference>
<dbReference type="SUPFAM" id="SSF47789">
    <property type="entry name" value="C-terminal domain of RNA polymerase alpha subunit"/>
    <property type="match status" value="1"/>
</dbReference>
<dbReference type="SUPFAM" id="SSF56553">
    <property type="entry name" value="Insert subdomain of RNA polymerase alpha subunit"/>
    <property type="match status" value="1"/>
</dbReference>
<dbReference type="SUPFAM" id="SSF55257">
    <property type="entry name" value="RBP11-like subunits of RNA polymerase"/>
    <property type="match status" value="1"/>
</dbReference>
<proteinExistence type="inferred from homology"/>
<keyword id="KW-0150">Chloroplast</keyword>
<keyword id="KW-0240">DNA-directed RNA polymerase</keyword>
<keyword id="KW-0548">Nucleotidyltransferase</keyword>
<keyword id="KW-0934">Plastid</keyword>
<keyword id="KW-0804">Transcription</keyword>
<keyword id="KW-0808">Transferase</keyword>
<comment type="function">
    <text evidence="1">DNA-dependent RNA polymerase catalyzes the transcription of DNA into RNA using the four ribonucleoside triphosphates as substrates.</text>
</comment>
<comment type="catalytic activity">
    <reaction evidence="1">
        <text>RNA(n) + a ribonucleoside 5'-triphosphate = RNA(n+1) + diphosphate</text>
        <dbReference type="Rhea" id="RHEA:21248"/>
        <dbReference type="Rhea" id="RHEA-COMP:14527"/>
        <dbReference type="Rhea" id="RHEA-COMP:17342"/>
        <dbReference type="ChEBI" id="CHEBI:33019"/>
        <dbReference type="ChEBI" id="CHEBI:61557"/>
        <dbReference type="ChEBI" id="CHEBI:140395"/>
        <dbReference type="EC" id="2.7.7.6"/>
    </reaction>
</comment>
<comment type="subunit">
    <text evidence="1">In plastids the minimal PEP RNA polymerase catalytic core is composed of four subunits: alpha, beta, beta', and beta''. When a (nuclear-encoded) sigma factor is associated with the core the holoenzyme is formed, which can initiate transcription.</text>
</comment>
<comment type="subcellular location">
    <subcellularLocation>
        <location>Plastid</location>
        <location>Chloroplast</location>
    </subcellularLocation>
</comment>
<comment type="domain">
    <text evidence="1">The N-terminal domain is essential for RNAP assembly and basal transcription, whereas the C-terminal domain is involved in interaction with transcriptional regulators and with upstream promoter elements.</text>
</comment>
<comment type="similarity">
    <text evidence="1">Belongs to the RNA polymerase alpha chain family.</text>
</comment>
<protein>
    <recommendedName>
        <fullName evidence="1">DNA-directed RNA polymerase subunit alpha</fullName>
        <shortName evidence="1">PEP</shortName>
        <ecNumber evidence="1">2.7.7.6</ecNumber>
    </recommendedName>
    <alternativeName>
        <fullName evidence="1">Plastid-encoded RNA polymerase subunit alpha</fullName>
        <shortName evidence="1">RNA polymerase subunit alpha</shortName>
    </alternativeName>
</protein>
<accession>Q4VZK3</accession>
<accession>A5J1W6</accession>
<organism>
    <name type="scientific">Cucumis sativus</name>
    <name type="common">Cucumber</name>
    <dbReference type="NCBI Taxonomy" id="3659"/>
    <lineage>
        <taxon>Eukaryota</taxon>
        <taxon>Viridiplantae</taxon>
        <taxon>Streptophyta</taxon>
        <taxon>Embryophyta</taxon>
        <taxon>Tracheophyta</taxon>
        <taxon>Spermatophyta</taxon>
        <taxon>Magnoliopsida</taxon>
        <taxon>eudicotyledons</taxon>
        <taxon>Gunneridae</taxon>
        <taxon>Pentapetalae</taxon>
        <taxon>rosids</taxon>
        <taxon>fabids</taxon>
        <taxon>Cucurbitales</taxon>
        <taxon>Cucurbitaceae</taxon>
        <taxon>Benincaseae</taxon>
        <taxon>Cucumis</taxon>
    </lineage>
</organism>
<name>RPOA_CUCSA</name>